<feature type="chain" id="PRO_0000187211" description="Ribonucleoside-diphosphate reductase subunit alpha">
    <location>
        <begin position="1"/>
        <end position="1044"/>
    </location>
</feature>
<feature type="domain" description="ATP-cone 1" evidence="2">
    <location>
        <begin position="9"/>
        <end position="111"/>
    </location>
</feature>
<feature type="domain" description="ATP-cone 2" evidence="2">
    <location>
        <begin position="118"/>
        <end position="217"/>
    </location>
</feature>
<feature type="domain" description="ATP-cone 3" evidence="2">
    <location>
        <begin position="235"/>
        <end position="325"/>
    </location>
</feature>
<feature type="active site" description="Proton acceptor" evidence="1">
    <location>
        <position position="668"/>
    </location>
</feature>
<feature type="active site" description="Cysteine radical intermediate" evidence="1">
    <location>
        <position position="670"/>
    </location>
</feature>
<feature type="active site" description="Proton acceptor" evidence="1">
    <location>
        <position position="672"/>
    </location>
</feature>
<feature type="binding site" evidence="1">
    <location>
        <position position="440"/>
    </location>
    <ligand>
        <name>substrate</name>
    </ligand>
</feature>
<feature type="binding site" evidence="1">
    <location>
        <begin position="455"/>
        <end position="456"/>
    </location>
    <ligand>
        <name>substrate</name>
    </ligand>
</feature>
<feature type="binding site" evidence="1">
    <location>
        <position position="484"/>
    </location>
    <ligand>
        <name>substrate</name>
    </ligand>
</feature>
<feature type="binding site" evidence="1">
    <location>
        <begin position="668"/>
        <end position="672"/>
    </location>
    <ligand>
        <name>substrate</name>
    </ligand>
</feature>
<feature type="binding site" evidence="1">
    <location>
        <begin position="855"/>
        <end position="859"/>
    </location>
    <ligand>
        <name>substrate</name>
    </ligand>
</feature>
<feature type="site" description="Important for hydrogen atom transfer" evidence="1">
    <location>
        <position position="456"/>
    </location>
</feature>
<feature type="site" description="Allosteric effector binding" evidence="1">
    <location>
        <position position="463"/>
    </location>
</feature>
<feature type="site" description="Allosteric effector binding" evidence="1">
    <location>
        <position position="493"/>
    </location>
</feature>
<feature type="site" description="Important for hydrogen atom transfer" evidence="1">
    <location>
        <position position="685"/>
    </location>
</feature>
<feature type="site" description="Important for electron transfer" evidence="1">
    <location>
        <position position="988"/>
    </location>
</feature>
<feature type="site" description="Important for electron transfer" evidence="1">
    <location>
        <position position="989"/>
    </location>
</feature>
<feature type="site" description="Interacts with thioredoxin/glutaredoxin" evidence="1">
    <location>
        <position position="1040"/>
    </location>
</feature>
<feature type="site" description="Interacts with thioredoxin/glutaredoxin" evidence="1">
    <location>
        <position position="1043"/>
    </location>
</feature>
<feature type="disulfide bond" description="Redox-active" evidence="1">
    <location>
        <begin position="456"/>
        <end position="685"/>
    </location>
</feature>
<protein>
    <recommendedName>
        <fullName>Ribonucleoside-diphosphate reductase subunit alpha</fullName>
        <ecNumber>1.17.4.1</ecNumber>
    </recommendedName>
    <alternativeName>
        <fullName>Ribonucleotide reductase</fullName>
    </alternativeName>
</protein>
<accession>Q9Z6S5</accession>
<accession>Q9JQC5</accession>
<evidence type="ECO:0000250" key="1"/>
<evidence type="ECO:0000255" key="2">
    <source>
        <dbReference type="PROSITE-ProRule" id="PRU00492"/>
    </source>
</evidence>
<evidence type="ECO:0000305" key="3"/>
<organism>
    <name type="scientific">Chlamydia pneumoniae</name>
    <name type="common">Chlamydophila pneumoniae</name>
    <dbReference type="NCBI Taxonomy" id="83558"/>
    <lineage>
        <taxon>Bacteria</taxon>
        <taxon>Pseudomonadati</taxon>
        <taxon>Chlamydiota</taxon>
        <taxon>Chlamydiia</taxon>
        <taxon>Chlamydiales</taxon>
        <taxon>Chlamydiaceae</taxon>
        <taxon>Chlamydia/Chlamydophila group</taxon>
        <taxon>Chlamydia</taxon>
    </lineage>
</organism>
<sequence>MVEVEEKHYTIVKRNGMFVPFNQDRIFQALEAAFRDTRSLETSSPLPKDLEESIAQITHKVVKEVLAKISEGQVVTVERIQDLVESQLYISGLQDVARDYIVYRDQRKAERGNSSSIIAIIRRDGGSAKFNPMKISAALEKAFRATLQINGMTPPATLSEINDLTLRIVEDVLSLHGEEAINLEEIQDIVEKQLMVAGYYDVAKNYILYREARARARANKDQDGQEEFVPQEETYVVQKEDGTTYLLRKTDLEKRFSWACKRFPKTTDSQLLADMAFMNLYSGIKEDEVTTACIMAARANIEREPDYAFIAAELLTSSLYEETLGCSSQDPNLSEIHKKHFKEYILNGEEYRLNPQLKDYDLDALSEVLDLSRDQQFSYMGVQNLYDRYFNLHEGRRLETAQIFWMRVSMGLALNEGEQKNFWAITFYNLLSTFRYTPATPTLFNSGMRHSQLSSCYLSTVKDDLSHIYKVISDNALLSKWAGGIGNDWTDVRATGAVIKGTNGKSQGVIPFIKVANDTAIAVNQGGKRKGAMCVYLENWHLDYEDFLELRKNTGDERRRTHDINTASWIPDLFFKRLEKKGMWTLFSPDDVPGLHEAYGLEFEKLYEEYERKVESGEIRLYKKVEAEVLWRKMLSMLYETGHPWITFKDPSNIRSNQDHVGVVRCSNLCTEILLNCSESETAVCNLGSINLVEHIRNDKLDEEKLKETISIAIRILDNVIDLNFYPTPEAKQANLTHRAVGLGVMGFQDVLYELNISYASQEAVEFSDECSEIIAYYAILASSLLAKERGTYASYSGSKWDRGYLPLDTIELLKETRGEHNVLVDTSSKKDWTPVRDTIQKYGMRNSQVMAIAPTATISNIIGVTQSIEPMYKHLFVKSNLSGEFTIPNTYLIKKLKELGLWDAEMLDDLKYFDGSLLEIERIPNHLKKLFLTAFEIEPEWIIECTSRRQKWIDMGVSLNLYLAEPDGKKLSNMYLTAWKKGLKTTYYLRSQAATSVEKSFIDINKRGIQPRWMKNKSASTSIVVERKTTPVCSMEEGCESCQ</sequence>
<reference key="1">
    <citation type="journal article" date="1999" name="Nat. Genet.">
        <title>Comparative genomes of Chlamydia pneumoniae and C. trachomatis.</title>
        <authorList>
            <person name="Kalman S."/>
            <person name="Mitchell W.P."/>
            <person name="Marathe R."/>
            <person name="Lammel C.J."/>
            <person name="Fan J."/>
            <person name="Hyman R.W."/>
            <person name="Olinger L."/>
            <person name="Grimwood J."/>
            <person name="Davis R.W."/>
            <person name="Stephens R.S."/>
        </authorList>
    </citation>
    <scope>NUCLEOTIDE SEQUENCE [LARGE SCALE GENOMIC DNA]</scope>
    <source>
        <strain>CWL029</strain>
    </source>
</reference>
<reference key="2">
    <citation type="journal article" date="2000" name="Nucleic Acids Res.">
        <title>Genome sequences of Chlamydia trachomatis MoPn and Chlamydia pneumoniae AR39.</title>
        <authorList>
            <person name="Read T.D."/>
            <person name="Brunham R.C."/>
            <person name="Shen C."/>
            <person name="Gill S.R."/>
            <person name="Heidelberg J.F."/>
            <person name="White O."/>
            <person name="Hickey E.K."/>
            <person name="Peterson J.D."/>
            <person name="Utterback T.R."/>
            <person name="Berry K.J."/>
            <person name="Bass S."/>
            <person name="Linher K.D."/>
            <person name="Weidman J.F."/>
            <person name="Khouri H.M."/>
            <person name="Craven B."/>
            <person name="Bowman C."/>
            <person name="Dodson R.J."/>
            <person name="Gwinn M.L."/>
            <person name="Nelson W.C."/>
            <person name="DeBoy R.T."/>
            <person name="Kolonay J.F."/>
            <person name="McClarty G."/>
            <person name="Salzberg S.L."/>
            <person name="Eisen J.A."/>
            <person name="Fraser C.M."/>
        </authorList>
    </citation>
    <scope>NUCLEOTIDE SEQUENCE [LARGE SCALE GENOMIC DNA]</scope>
    <source>
        <strain>AR39</strain>
    </source>
</reference>
<reference key="3">
    <citation type="journal article" date="2000" name="Nucleic Acids Res.">
        <title>Comparison of whole genome sequences of Chlamydia pneumoniae J138 from Japan and CWL029 from USA.</title>
        <authorList>
            <person name="Shirai M."/>
            <person name="Hirakawa H."/>
            <person name="Kimoto M."/>
            <person name="Tabuchi M."/>
            <person name="Kishi F."/>
            <person name="Ouchi K."/>
            <person name="Shiba T."/>
            <person name="Ishii K."/>
            <person name="Hattori M."/>
            <person name="Kuhara S."/>
            <person name="Nakazawa T."/>
        </authorList>
    </citation>
    <scope>NUCLEOTIDE SEQUENCE [LARGE SCALE GENOMIC DNA]</scope>
    <source>
        <strain>J138</strain>
    </source>
</reference>
<reference key="4">
    <citation type="submission" date="2002-05" db="EMBL/GenBank/DDBJ databases">
        <title>The genome sequence of Chlamydia pneumoniae TW183 and comparison with other Chlamydia strains based on whole genome sequence analysis.</title>
        <authorList>
            <person name="Geng M.M."/>
            <person name="Schuhmacher A."/>
            <person name="Muehldorfer I."/>
            <person name="Bensch K.W."/>
            <person name="Schaefer K.P."/>
            <person name="Schneider S."/>
            <person name="Pohl T."/>
            <person name="Essig A."/>
            <person name="Marre R."/>
            <person name="Melchers K."/>
        </authorList>
    </citation>
    <scope>NUCLEOTIDE SEQUENCE [LARGE SCALE GENOMIC DNA]</scope>
    <source>
        <strain>TW-183</strain>
    </source>
</reference>
<gene>
    <name type="primary">nrdA</name>
    <name type="ordered locus">CPn_0984</name>
    <name type="ordered locus">CP_0872</name>
    <name type="ordered locus">CpB1021</name>
</gene>
<name>RIR1_CHLPN</name>
<proteinExistence type="inferred from homology"/>
<keyword id="KW-0021">Allosteric enzyme</keyword>
<keyword id="KW-0067">ATP-binding</keyword>
<keyword id="KW-0215">Deoxyribonucleotide synthesis</keyword>
<keyword id="KW-1015">Disulfide bond</keyword>
<keyword id="KW-0547">Nucleotide-binding</keyword>
<keyword id="KW-0560">Oxidoreductase</keyword>
<keyword id="KW-0677">Repeat</keyword>
<dbReference type="EC" id="1.17.4.1"/>
<dbReference type="EMBL" id="AE001363">
    <property type="protein sequence ID" value="AAD19121.1"/>
    <property type="molecule type" value="Genomic_DNA"/>
</dbReference>
<dbReference type="EMBL" id="AE002161">
    <property type="protein sequence ID" value="AAF38661.1"/>
    <property type="molecule type" value="Genomic_DNA"/>
</dbReference>
<dbReference type="EMBL" id="BA000008">
    <property type="protein sequence ID" value="BAA99191.1"/>
    <property type="molecule type" value="Genomic_DNA"/>
</dbReference>
<dbReference type="EMBL" id="AE009440">
    <property type="protein sequence ID" value="AAP98950.1"/>
    <property type="molecule type" value="Genomic_DNA"/>
</dbReference>
<dbReference type="PIR" id="A72010">
    <property type="entry name" value="A72010"/>
</dbReference>
<dbReference type="PIR" id="E86613">
    <property type="entry name" value="E86613"/>
</dbReference>
<dbReference type="RefSeq" id="NP_225178.1">
    <property type="nucleotide sequence ID" value="NC_000922.1"/>
</dbReference>
<dbReference type="RefSeq" id="WP_010883617.1">
    <property type="nucleotide sequence ID" value="NZ_LN847257.1"/>
</dbReference>
<dbReference type="SMR" id="Q9Z6S5"/>
<dbReference type="STRING" id="406984.CPK_ORF00409"/>
<dbReference type="GeneID" id="45051040"/>
<dbReference type="KEGG" id="cpa:CP_0872"/>
<dbReference type="KEGG" id="cpj:nrdA"/>
<dbReference type="KEGG" id="cpn:CPn_0984"/>
<dbReference type="KEGG" id="cpt:CpB1021"/>
<dbReference type="PATRIC" id="fig|115713.3.peg.1079"/>
<dbReference type="eggNOG" id="COG0209">
    <property type="taxonomic scope" value="Bacteria"/>
</dbReference>
<dbReference type="eggNOG" id="COG1327">
    <property type="taxonomic scope" value="Bacteria"/>
</dbReference>
<dbReference type="HOGENOM" id="CLU_000404_3_0_0"/>
<dbReference type="OrthoDB" id="9762933at2"/>
<dbReference type="Proteomes" id="UP000000583">
    <property type="component" value="Chromosome"/>
</dbReference>
<dbReference type="Proteomes" id="UP000000801">
    <property type="component" value="Chromosome"/>
</dbReference>
<dbReference type="GO" id="GO:0005971">
    <property type="term" value="C:ribonucleoside-diphosphate reductase complex"/>
    <property type="evidence" value="ECO:0007669"/>
    <property type="project" value="TreeGrafter"/>
</dbReference>
<dbReference type="GO" id="GO:0005524">
    <property type="term" value="F:ATP binding"/>
    <property type="evidence" value="ECO:0007669"/>
    <property type="project" value="UniProtKB-KW"/>
</dbReference>
<dbReference type="GO" id="GO:0004748">
    <property type="term" value="F:ribonucleoside-diphosphate reductase activity, thioredoxin disulfide as acceptor"/>
    <property type="evidence" value="ECO:0007669"/>
    <property type="project" value="UniProtKB-EC"/>
</dbReference>
<dbReference type="GO" id="GO:0009263">
    <property type="term" value="P:deoxyribonucleotide biosynthetic process"/>
    <property type="evidence" value="ECO:0007669"/>
    <property type="project" value="UniProtKB-KW"/>
</dbReference>
<dbReference type="CDD" id="cd01679">
    <property type="entry name" value="RNR_I"/>
    <property type="match status" value="1"/>
</dbReference>
<dbReference type="FunFam" id="3.20.70.20:FF:000009">
    <property type="entry name" value="Ribonucleoside-diphosphate reductase"/>
    <property type="match status" value="1"/>
</dbReference>
<dbReference type="Gene3D" id="3.20.70.20">
    <property type="match status" value="1"/>
</dbReference>
<dbReference type="InterPro" id="IPR005144">
    <property type="entry name" value="ATP-cone_dom"/>
</dbReference>
<dbReference type="InterPro" id="IPR013346">
    <property type="entry name" value="NrdE_NrdA_C"/>
</dbReference>
<dbReference type="InterPro" id="IPR000788">
    <property type="entry name" value="RNR_lg_C"/>
</dbReference>
<dbReference type="InterPro" id="IPR013509">
    <property type="entry name" value="RNR_lsu_N"/>
</dbReference>
<dbReference type="InterPro" id="IPR008926">
    <property type="entry name" value="RNR_R1-su_N"/>
</dbReference>
<dbReference type="InterPro" id="IPR039718">
    <property type="entry name" value="Rrm1"/>
</dbReference>
<dbReference type="NCBIfam" id="TIGR02506">
    <property type="entry name" value="NrdE_NrdA"/>
    <property type="match status" value="1"/>
</dbReference>
<dbReference type="NCBIfam" id="NF005544">
    <property type="entry name" value="PRK07207.1"/>
    <property type="match status" value="1"/>
</dbReference>
<dbReference type="NCBIfam" id="NF009029">
    <property type="entry name" value="PRK12365.1"/>
    <property type="match status" value="1"/>
</dbReference>
<dbReference type="PANTHER" id="PTHR11573">
    <property type="entry name" value="RIBONUCLEOSIDE-DIPHOSPHATE REDUCTASE LARGE CHAIN"/>
    <property type="match status" value="1"/>
</dbReference>
<dbReference type="PANTHER" id="PTHR11573:SF6">
    <property type="entry name" value="RIBONUCLEOSIDE-DIPHOSPHATE REDUCTASE LARGE SUBUNIT"/>
    <property type="match status" value="1"/>
</dbReference>
<dbReference type="Pfam" id="PF03477">
    <property type="entry name" value="ATP-cone"/>
    <property type="match status" value="2"/>
</dbReference>
<dbReference type="Pfam" id="PF02867">
    <property type="entry name" value="Ribonuc_red_lgC"/>
    <property type="match status" value="1"/>
</dbReference>
<dbReference type="Pfam" id="PF00317">
    <property type="entry name" value="Ribonuc_red_lgN"/>
    <property type="match status" value="1"/>
</dbReference>
<dbReference type="PRINTS" id="PR01183">
    <property type="entry name" value="RIBORDTASEM1"/>
</dbReference>
<dbReference type="SUPFAM" id="SSF51998">
    <property type="entry name" value="PFL-like glycyl radical enzymes"/>
    <property type="match status" value="1"/>
</dbReference>
<dbReference type="SUPFAM" id="SSF48168">
    <property type="entry name" value="R1 subunit of ribonucleotide reductase, N-terminal domain"/>
    <property type="match status" value="1"/>
</dbReference>
<dbReference type="PROSITE" id="PS51161">
    <property type="entry name" value="ATP_CONE"/>
    <property type="match status" value="3"/>
</dbReference>
<dbReference type="PROSITE" id="PS00089">
    <property type="entry name" value="RIBORED_LARGE"/>
    <property type="match status" value="1"/>
</dbReference>
<comment type="function">
    <text evidence="1">Provides the precursors necessary for DNA synthesis. Catalyzes the biosynthesis of deoxyribonucleotides from the corresponding ribonucleotides (By similarity).</text>
</comment>
<comment type="catalytic activity">
    <reaction>
        <text>a 2'-deoxyribonucleoside 5'-diphosphate + [thioredoxin]-disulfide + H2O = a ribonucleoside 5'-diphosphate + [thioredoxin]-dithiol</text>
        <dbReference type="Rhea" id="RHEA:23252"/>
        <dbReference type="Rhea" id="RHEA-COMP:10698"/>
        <dbReference type="Rhea" id="RHEA-COMP:10700"/>
        <dbReference type="ChEBI" id="CHEBI:15377"/>
        <dbReference type="ChEBI" id="CHEBI:29950"/>
        <dbReference type="ChEBI" id="CHEBI:50058"/>
        <dbReference type="ChEBI" id="CHEBI:57930"/>
        <dbReference type="ChEBI" id="CHEBI:73316"/>
        <dbReference type="EC" id="1.17.4.1"/>
    </reaction>
</comment>
<comment type="activity regulation">
    <text evidence="1">Under complex allosteric control mediated by deoxynucleoside triphosphates and ATP binding. The type of nucleotide bound at the specificity site determines substrate preference. It seems probable that ATP makes the enzyme reduce CDP and UDP, dGTP favors ADP reduction and dTTP favors GDP reduction (By similarity).</text>
</comment>
<comment type="subunit">
    <text evidence="1">Tetramer of two alpha and two beta subunits.</text>
</comment>
<comment type="similarity">
    <text evidence="3">Belongs to the ribonucleoside diphosphate reductase large chain family.</text>
</comment>